<protein>
    <recommendedName>
        <fullName>Galacturonokinase</fullName>
        <ecNumber>2.7.1.44</ecNumber>
    </recommendedName>
    <alternativeName>
        <fullName>D-galacturonic acid-1-P kinase</fullName>
    </alternativeName>
</protein>
<organism>
    <name type="scientific">Arabidopsis thaliana</name>
    <name type="common">Mouse-ear cress</name>
    <dbReference type="NCBI Taxonomy" id="3702"/>
    <lineage>
        <taxon>Eukaryota</taxon>
        <taxon>Viridiplantae</taxon>
        <taxon>Streptophyta</taxon>
        <taxon>Embryophyta</taxon>
        <taxon>Tracheophyta</taxon>
        <taxon>Spermatophyta</taxon>
        <taxon>Magnoliopsida</taxon>
        <taxon>eudicotyledons</taxon>
        <taxon>Gunneridae</taxon>
        <taxon>Pentapetalae</taxon>
        <taxon>rosids</taxon>
        <taxon>malvids</taxon>
        <taxon>Brassicales</taxon>
        <taxon>Brassicaceae</taxon>
        <taxon>Camelineae</taxon>
        <taxon>Arabidopsis</taxon>
    </lineage>
</organism>
<sequence length="424" mass="45729">MSWPTDSELNSIKEAVAQMSGRDKGEVRVVVAPYRICPLGAHIDHQGGTVSAMTINKGILLGFVPSGDTQVQLRSAQFEGEVCFRVDEIQHPIGLANKNGASTPSPSKEKSIWGTYARGAVYALQSSKKNLKQGIIGYLSGSNGLDSSGLSSSAAVGVAYLLALENANELTVSPTENIEYDRLIENGYLGLRNGILDQSAILLSNYGCLTYMDCKTLDHELVQAPELEKPFRILLAFSGLRQALTTNPGYNLRVSECQEAAKVLLTASGNSELEPTLCNVEHAVYEAHKHELKPVLAKRAEHYFSENMRVIKGREAWASGNLEEFGKLISASGLSSIENYECGAEPLIQLYKILLKAPGVYGARFSGAGFRGCCLAFVDAEKAEAAASYVKDEYEKAQPEFANNLNGGKPVLICEAGDAARVLL</sequence>
<feature type="initiator methionine" description="Removed" evidence="5">
    <location>
        <position position="1"/>
    </location>
</feature>
<feature type="chain" id="PRO_0000407403" description="Galacturonokinase">
    <location>
        <begin position="2"/>
        <end position="424"/>
    </location>
</feature>
<feature type="active site" description="Proton acceptor" evidence="1">
    <location>
        <position position="197"/>
    </location>
</feature>
<feature type="binding site" evidence="2">
    <location>
        <begin position="146"/>
        <end position="155"/>
    </location>
    <ligand>
        <name>ATP</name>
        <dbReference type="ChEBI" id="CHEBI:30616"/>
    </ligand>
</feature>
<feature type="site" description="Transition state stabilizer" evidence="1">
    <location>
        <position position="35"/>
    </location>
</feature>
<feature type="modified residue" description="N-acetylserine" evidence="5">
    <location>
        <position position="2"/>
    </location>
</feature>
<feature type="mutagenesis site" description="Loss of activity." evidence="3">
    <original>A</original>
    <variation>E</variation>
    <location>
        <position position="41"/>
    </location>
</feature>
<feature type="mutagenesis site" description="Loss of sugar specificity." evidence="3">
    <original>Y</original>
    <variation>F</variation>
    <location>
        <position position="250"/>
    </location>
</feature>
<feature type="mutagenesis site" description="Reduced phosphorylation activity." evidence="3">
    <original>A</original>
    <variation>S</variation>
    <location>
        <position position="368"/>
    </location>
</feature>
<gene>
    <name type="primary">GALAK</name>
    <name type="ordered locus">At3g10700</name>
    <name type="ORF">F13M14.1 T7M13.22</name>
</gene>
<dbReference type="EC" id="2.7.1.44"/>
<dbReference type="EMBL" id="FJ439676">
    <property type="protein sequence ID" value="ACJ65066.1"/>
    <property type="molecule type" value="mRNA"/>
</dbReference>
<dbReference type="EMBL" id="AC011560">
    <property type="protein sequence ID" value="AAG51369.1"/>
    <property type="molecule type" value="Genomic_DNA"/>
</dbReference>
<dbReference type="EMBL" id="AC011708">
    <property type="protein sequence ID" value="AAF19579.1"/>
    <property type="status" value="ALT_SEQ"/>
    <property type="molecule type" value="Genomic_DNA"/>
</dbReference>
<dbReference type="EMBL" id="CP002686">
    <property type="protein sequence ID" value="AEE74944.1"/>
    <property type="molecule type" value="Genomic_DNA"/>
</dbReference>
<dbReference type="EMBL" id="AY072103">
    <property type="protein sequence ID" value="AAL59925.1"/>
    <property type="molecule type" value="mRNA"/>
</dbReference>
<dbReference type="EMBL" id="AY096732">
    <property type="protein sequence ID" value="AAM20366.1"/>
    <property type="molecule type" value="mRNA"/>
</dbReference>
<dbReference type="RefSeq" id="NP_187681.2">
    <property type="nucleotide sequence ID" value="NM_111906.4"/>
</dbReference>
<dbReference type="SMR" id="Q8VYG2"/>
<dbReference type="FunCoup" id="Q8VYG2">
    <property type="interactions" value="1166"/>
</dbReference>
<dbReference type="STRING" id="3702.Q8VYG2"/>
<dbReference type="iPTMnet" id="Q8VYG2"/>
<dbReference type="PaxDb" id="3702-AT3G10700.1"/>
<dbReference type="EnsemblPlants" id="AT3G10700.1">
    <property type="protein sequence ID" value="AT3G10700.1"/>
    <property type="gene ID" value="AT3G10700"/>
</dbReference>
<dbReference type="GeneID" id="820239"/>
<dbReference type="Gramene" id="AT3G10700.1">
    <property type="protein sequence ID" value="AT3G10700.1"/>
    <property type="gene ID" value="AT3G10700"/>
</dbReference>
<dbReference type="KEGG" id="ath:AT3G10700"/>
<dbReference type="Araport" id="AT3G10700"/>
<dbReference type="TAIR" id="AT3G10700">
    <property type="gene designation" value="GALAK"/>
</dbReference>
<dbReference type="eggNOG" id="KOG0631">
    <property type="taxonomic scope" value="Eukaryota"/>
</dbReference>
<dbReference type="HOGENOM" id="CLU_017814_5_0_1"/>
<dbReference type="InParanoid" id="Q8VYG2"/>
<dbReference type="OMA" id="LCNVEPE"/>
<dbReference type="PhylomeDB" id="Q8VYG2"/>
<dbReference type="BioCyc" id="ARA:AT3G10700-MONOMER"/>
<dbReference type="BRENDA" id="2.7.1.44">
    <property type="organism ID" value="399"/>
</dbReference>
<dbReference type="PRO" id="PR:Q8VYG2"/>
<dbReference type="Proteomes" id="UP000006548">
    <property type="component" value="Chromosome 3"/>
</dbReference>
<dbReference type="ExpressionAtlas" id="Q8VYG2">
    <property type="expression patterns" value="baseline and differential"/>
</dbReference>
<dbReference type="GO" id="GO:0005737">
    <property type="term" value="C:cytoplasm"/>
    <property type="evidence" value="ECO:0007669"/>
    <property type="project" value="InterPro"/>
</dbReference>
<dbReference type="GO" id="GO:0005524">
    <property type="term" value="F:ATP binding"/>
    <property type="evidence" value="ECO:0007669"/>
    <property type="project" value="UniProtKB-KW"/>
</dbReference>
<dbReference type="GO" id="GO:0047912">
    <property type="term" value="F:galacturonokinase activity"/>
    <property type="evidence" value="ECO:0000314"/>
    <property type="project" value="TAIR"/>
</dbReference>
<dbReference type="GO" id="GO:0046872">
    <property type="term" value="F:metal ion binding"/>
    <property type="evidence" value="ECO:0007669"/>
    <property type="project" value="UniProtKB-KW"/>
</dbReference>
<dbReference type="GO" id="GO:0046835">
    <property type="term" value="P:carbohydrate phosphorylation"/>
    <property type="evidence" value="ECO:0000314"/>
    <property type="project" value="TAIR"/>
</dbReference>
<dbReference type="GO" id="GO:0046396">
    <property type="term" value="P:D-galacturonate metabolic process"/>
    <property type="evidence" value="ECO:0000314"/>
    <property type="project" value="TAIR"/>
</dbReference>
<dbReference type="GO" id="GO:0006012">
    <property type="term" value="P:galactose metabolic process"/>
    <property type="evidence" value="ECO:0007669"/>
    <property type="project" value="InterPro"/>
</dbReference>
<dbReference type="FunFam" id="3.30.230.10:FF:000061">
    <property type="entry name" value="Galactokinase"/>
    <property type="match status" value="1"/>
</dbReference>
<dbReference type="FunFam" id="3.30.70.890:FF:000001">
    <property type="entry name" value="Galactokinase"/>
    <property type="match status" value="1"/>
</dbReference>
<dbReference type="Gene3D" id="3.30.230.10">
    <property type="match status" value="1"/>
</dbReference>
<dbReference type="Gene3D" id="3.30.70.890">
    <property type="entry name" value="GHMP kinase, C-terminal domain"/>
    <property type="match status" value="1"/>
</dbReference>
<dbReference type="InterPro" id="IPR000705">
    <property type="entry name" value="Galactokinase"/>
</dbReference>
<dbReference type="InterPro" id="IPR019539">
    <property type="entry name" value="GalKase_N"/>
</dbReference>
<dbReference type="InterPro" id="IPR013750">
    <property type="entry name" value="GHMP_kinase_C_dom"/>
</dbReference>
<dbReference type="InterPro" id="IPR036554">
    <property type="entry name" value="GHMP_kinase_C_sf"/>
</dbReference>
<dbReference type="InterPro" id="IPR006204">
    <property type="entry name" value="GHMP_kinase_N_dom"/>
</dbReference>
<dbReference type="InterPro" id="IPR006206">
    <property type="entry name" value="Mevalonate/galactokinase"/>
</dbReference>
<dbReference type="InterPro" id="IPR020568">
    <property type="entry name" value="Ribosomal_Su5_D2-typ_SF"/>
</dbReference>
<dbReference type="InterPro" id="IPR014721">
    <property type="entry name" value="Ribsml_uS5_D2-typ_fold_subgr"/>
</dbReference>
<dbReference type="PANTHER" id="PTHR10457:SF6">
    <property type="entry name" value="GALACTURONOKINASE"/>
    <property type="match status" value="1"/>
</dbReference>
<dbReference type="PANTHER" id="PTHR10457">
    <property type="entry name" value="MEVALONATE KINASE/GALACTOKINASE"/>
    <property type="match status" value="1"/>
</dbReference>
<dbReference type="Pfam" id="PF10509">
    <property type="entry name" value="GalKase_gal_bdg"/>
    <property type="match status" value="1"/>
</dbReference>
<dbReference type="Pfam" id="PF08544">
    <property type="entry name" value="GHMP_kinases_C"/>
    <property type="match status" value="1"/>
</dbReference>
<dbReference type="Pfam" id="PF00288">
    <property type="entry name" value="GHMP_kinases_N"/>
    <property type="match status" value="1"/>
</dbReference>
<dbReference type="PIRSF" id="PIRSF000530">
    <property type="entry name" value="Galactokinase"/>
    <property type="match status" value="1"/>
</dbReference>
<dbReference type="PRINTS" id="PR00473">
    <property type="entry name" value="GALCTOKINASE"/>
</dbReference>
<dbReference type="PRINTS" id="PR00959">
    <property type="entry name" value="MEVGALKINASE"/>
</dbReference>
<dbReference type="SUPFAM" id="SSF55060">
    <property type="entry name" value="GHMP Kinase, C-terminal domain"/>
    <property type="match status" value="1"/>
</dbReference>
<dbReference type="SUPFAM" id="SSF54211">
    <property type="entry name" value="Ribosomal protein S5 domain 2-like"/>
    <property type="match status" value="1"/>
</dbReference>
<comment type="function">
    <text evidence="3">Sugar-1-kinase with a strict substrate specificity for the alpha-anomeric configuration of D-galacturonic acid (D-GalA) and ATP. Involved in the biosynthesis of UDP-galacturonic acid (UDP-GalA) from the salvaged GalA that is released during growth-dependent cell wall restructuring.</text>
</comment>
<comment type="catalytic activity">
    <reaction evidence="3">
        <text>D-galacturonate + ATP = 1-phospho-alpha-D-galacturonate + ADP + H(+)</text>
        <dbReference type="Rhea" id="RHEA:12965"/>
        <dbReference type="ChEBI" id="CHEBI:15378"/>
        <dbReference type="ChEBI" id="CHEBI:30616"/>
        <dbReference type="ChEBI" id="CHEBI:58186"/>
        <dbReference type="ChEBI" id="CHEBI:75525"/>
        <dbReference type="ChEBI" id="CHEBI:456216"/>
        <dbReference type="EC" id="2.7.1.44"/>
    </reaction>
</comment>
<comment type="cofactor">
    <cofactor evidence="3">
        <name>Mg(2+)</name>
        <dbReference type="ChEBI" id="CHEBI:18420"/>
    </cofactor>
    <cofactor evidence="3">
        <name>Mn(2+)</name>
        <dbReference type="ChEBI" id="CHEBI:29035"/>
    </cofactor>
    <cofactor evidence="3">
        <name>Ca(2+)</name>
        <dbReference type="ChEBI" id="CHEBI:29108"/>
    </cofactor>
    <text evidence="3">Magnesium. Can also use other divalent cations like manganese or calcium.</text>
</comment>
<comment type="activity regulation">
    <text evidence="3">Inhibited by EDTA and ADP.</text>
</comment>
<comment type="biophysicochemical properties">
    <kinetics>
        <KM evidence="3">70.8 uM for D-galacturonate</KM>
        <KM evidence="3">195 uM for ATP</KM>
        <Vmax evidence="3">1.0 umol/min/ug enzyme toward D-galacturonate</Vmax>
        <Vmax evidence="3">0.5 umol/min/ug enzyme toward ATP</Vmax>
    </kinetics>
    <phDependence>
        <text evidence="3">Optimum pH is 7.5-7.8.</text>
    </phDependence>
    <temperatureDependence>
        <text evidence="3">Optimum temperature is 37 degrees Celsius.</text>
    </temperatureDependence>
</comment>
<comment type="tissue specificity">
    <text evidence="3">Expressed in roots, stems, leaves, flowers and young siliques. Higher expression in the elongating middle stem region than in the lower or upper stem region.</text>
</comment>
<comment type="similarity">
    <text evidence="4">Belongs to the GHMP kinase family.</text>
</comment>
<comment type="sequence caution" evidence="4">
    <conflict type="erroneous gene model prediction">
        <sequence resource="EMBL-CDS" id="AAF19579"/>
    </conflict>
</comment>
<keyword id="KW-0007">Acetylation</keyword>
<keyword id="KW-0067">ATP-binding</keyword>
<keyword id="KW-0106">Calcium</keyword>
<keyword id="KW-0119">Carbohydrate metabolism</keyword>
<keyword id="KW-0418">Kinase</keyword>
<keyword id="KW-0460">Magnesium</keyword>
<keyword id="KW-0464">Manganese</keyword>
<keyword id="KW-0479">Metal-binding</keyword>
<keyword id="KW-0547">Nucleotide-binding</keyword>
<keyword id="KW-1185">Reference proteome</keyword>
<keyword id="KW-0808">Transferase</keyword>
<reference key="1">
    <citation type="journal article" date="2009" name="J. Biol. Chem.">
        <title>Identification of galacturonic acid-1-phosphate kinase, a new member of the GHMP kinase superfamily in plants, and comparison with galactose-1-phosphate kinase.</title>
        <authorList>
            <person name="Yang T."/>
            <person name="Bar-Peled L."/>
            <person name="Gebhart L."/>
            <person name="Lee S.G."/>
            <person name="Bar-Peled M."/>
        </authorList>
    </citation>
    <scope>NUCLEOTIDE SEQUENCE [MRNA]</scope>
    <scope>FUNCTION</scope>
    <scope>CATALYTIC ACTIVITY</scope>
    <scope>COFACTOR</scope>
    <scope>ACTIVITY REGULATION</scope>
    <scope>BIOPHYSICOCHEMICAL PROPERTIES</scope>
    <scope>MUTAGENESIS OF ALA-41; TYR-250 AND ALA-368</scope>
    <scope>TISSUE SPECIFICITY</scope>
</reference>
<reference key="2">
    <citation type="journal article" date="2000" name="Nature">
        <title>Sequence and analysis of chromosome 3 of the plant Arabidopsis thaliana.</title>
        <authorList>
            <person name="Salanoubat M."/>
            <person name="Lemcke K."/>
            <person name="Rieger M."/>
            <person name="Ansorge W."/>
            <person name="Unseld M."/>
            <person name="Fartmann B."/>
            <person name="Valle G."/>
            <person name="Bloecker H."/>
            <person name="Perez-Alonso M."/>
            <person name="Obermaier B."/>
            <person name="Delseny M."/>
            <person name="Boutry M."/>
            <person name="Grivell L.A."/>
            <person name="Mache R."/>
            <person name="Puigdomenech P."/>
            <person name="De Simone V."/>
            <person name="Choisne N."/>
            <person name="Artiguenave F."/>
            <person name="Robert C."/>
            <person name="Brottier P."/>
            <person name="Wincker P."/>
            <person name="Cattolico L."/>
            <person name="Weissenbach J."/>
            <person name="Saurin W."/>
            <person name="Quetier F."/>
            <person name="Schaefer M."/>
            <person name="Mueller-Auer S."/>
            <person name="Gabel C."/>
            <person name="Fuchs M."/>
            <person name="Benes V."/>
            <person name="Wurmbach E."/>
            <person name="Drzonek H."/>
            <person name="Erfle H."/>
            <person name="Jordan N."/>
            <person name="Bangert S."/>
            <person name="Wiedelmann R."/>
            <person name="Kranz H."/>
            <person name="Voss H."/>
            <person name="Holland R."/>
            <person name="Brandt P."/>
            <person name="Nyakatura G."/>
            <person name="Vezzi A."/>
            <person name="D'Angelo M."/>
            <person name="Pallavicini A."/>
            <person name="Toppo S."/>
            <person name="Simionati B."/>
            <person name="Conrad A."/>
            <person name="Hornischer K."/>
            <person name="Kauer G."/>
            <person name="Loehnert T.-H."/>
            <person name="Nordsiek G."/>
            <person name="Reichelt J."/>
            <person name="Scharfe M."/>
            <person name="Schoen O."/>
            <person name="Bargues M."/>
            <person name="Terol J."/>
            <person name="Climent J."/>
            <person name="Navarro P."/>
            <person name="Collado C."/>
            <person name="Perez-Perez A."/>
            <person name="Ottenwaelder B."/>
            <person name="Duchemin D."/>
            <person name="Cooke R."/>
            <person name="Laudie M."/>
            <person name="Berger-Llauro C."/>
            <person name="Purnelle B."/>
            <person name="Masuy D."/>
            <person name="de Haan M."/>
            <person name="Maarse A.C."/>
            <person name="Alcaraz J.-P."/>
            <person name="Cottet A."/>
            <person name="Casacuberta E."/>
            <person name="Monfort A."/>
            <person name="Argiriou A."/>
            <person name="Flores M."/>
            <person name="Liguori R."/>
            <person name="Vitale D."/>
            <person name="Mannhaupt G."/>
            <person name="Haase D."/>
            <person name="Schoof H."/>
            <person name="Rudd S."/>
            <person name="Zaccaria P."/>
            <person name="Mewes H.-W."/>
            <person name="Mayer K.F.X."/>
            <person name="Kaul S."/>
            <person name="Town C.D."/>
            <person name="Koo H.L."/>
            <person name="Tallon L.J."/>
            <person name="Jenkins J."/>
            <person name="Rooney T."/>
            <person name="Rizzo M."/>
            <person name="Walts A."/>
            <person name="Utterback T."/>
            <person name="Fujii C.Y."/>
            <person name="Shea T.P."/>
            <person name="Creasy T.H."/>
            <person name="Haas B."/>
            <person name="Maiti R."/>
            <person name="Wu D."/>
            <person name="Peterson J."/>
            <person name="Van Aken S."/>
            <person name="Pai G."/>
            <person name="Militscher J."/>
            <person name="Sellers P."/>
            <person name="Gill J.E."/>
            <person name="Feldblyum T.V."/>
            <person name="Preuss D."/>
            <person name="Lin X."/>
            <person name="Nierman W.C."/>
            <person name="Salzberg S.L."/>
            <person name="White O."/>
            <person name="Venter J.C."/>
            <person name="Fraser C.M."/>
            <person name="Kaneko T."/>
            <person name="Nakamura Y."/>
            <person name="Sato S."/>
            <person name="Kato T."/>
            <person name="Asamizu E."/>
            <person name="Sasamoto S."/>
            <person name="Kimura T."/>
            <person name="Idesawa K."/>
            <person name="Kawashima K."/>
            <person name="Kishida Y."/>
            <person name="Kiyokawa C."/>
            <person name="Kohara M."/>
            <person name="Matsumoto M."/>
            <person name="Matsuno A."/>
            <person name="Muraki A."/>
            <person name="Nakayama S."/>
            <person name="Nakazaki N."/>
            <person name="Shinpo S."/>
            <person name="Takeuchi C."/>
            <person name="Wada T."/>
            <person name="Watanabe A."/>
            <person name="Yamada M."/>
            <person name="Yasuda M."/>
            <person name="Tabata S."/>
        </authorList>
    </citation>
    <scope>NUCLEOTIDE SEQUENCE [LARGE SCALE GENOMIC DNA]</scope>
    <source>
        <strain>cv. Columbia</strain>
    </source>
</reference>
<reference key="3">
    <citation type="journal article" date="2017" name="Plant J.">
        <title>Araport11: a complete reannotation of the Arabidopsis thaliana reference genome.</title>
        <authorList>
            <person name="Cheng C.Y."/>
            <person name="Krishnakumar V."/>
            <person name="Chan A.P."/>
            <person name="Thibaud-Nissen F."/>
            <person name="Schobel S."/>
            <person name="Town C.D."/>
        </authorList>
    </citation>
    <scope>GENOME REANNOTATION</scope>
    <source>
        <strain>cv. Columbia</strain>
    </source>
</reference>
<reference key="4">
    <citation type="journal article" date="2003" name="Science">
        <title>Empirical analysis of transcriptional activity in the Arabidopsis genome.</title>
        <authorList>
            <person name="Yamada K."/>
            <person name="Lim J."/>
            <person name="Dale J.M."/>
            <person name="Chen H."/>
            <person name="Shinn P."/>
            <person name="Palm C.J."/>
            <person name="Southwick A.M."/>
            <person name="Wu H.C."/>
            <person name="Kim C.J."/>
            <person name="Nguyen M."/>
            <person name="Pham P.K."/>
            <person name="Cheuk R.F."/>
            <person name="Karlin-Newmann G."/>
            <person name="Liu S.X."/>
            <person name="Lam B."/>
            <person name="Sakano H."/>
            <person name="Wu T."/>
            <person name="Yu G."/>
            <person name="Miranda M."/>
            <person name="Quach H.L."/>
            <person name="Tripp M."/>
            <person name="Chang C.H."/>
            <person name="Lee J.M."/>
            <person name="Toriumi M.J."/>
            <person name="Chan M.M."/>
            <person name="Tang C.C."/>
            <person name="Onodera C.S."/>
            <person name="Deng J.M."/>
            <person name="Akiyama K."/>
            <person name="Ansari Y."/>
            <person name="Arakawa T."/>
            <person name="Banh J."/>
            <person name="Banno F."/>
            <person name="Bowser L."/>
            <person name="Brooks S.Y."/>
            <person name="Carninci P."/>
            <person name="Chao Q."/>
            <person name="Choy N."/>
            <person name="Enju A."/>
            <person name="Goldsmith A.D."/>
            <person name="Gurjal M."/>
            <person name="Hansen N.F."/>
            <person name="Hayashizaki Y."/>
            <person name="Johnson-Hopson C."/>
            <person name="Hsuan V.W."/>
            <person name="Iida K."/>
            <person name="Karnes M."/>
            <person name="Khan S."/>
            <person name="Koesema E."/>
            <person name="Ishida J."/>
            <person name="Jiang P.X."/>
            <person name="Jones T."/>
            <person name="Kawai J."/>
            <person name="Kamiya A."/>
            <person name="Meyers C."/>
            <person name="Nakajima M."/>
            <person name="Narusaka M."/>
            <person name="Seki M."/>
            <person name="Sakurai T."/>
            <person name="Satou M."/>
            <person name="Tamse R."/>
            <person name="Vaysberg M."/>
            <person name="Wallender E.K."/>
            <person name="Wong C."/>
            <person name="Yamamura Y."/>
            <person name="Yuan S."/>
            <person name="Shinozaki K."/>
            <person name="Davis R.W."/>
            <person name="Theologis A."/>
            <person name="Ecker J.R."/>
        </authorList>
    </citation>
    <scope>NUCLEOTIDE SEQUENCE [LARGE SCALE MRNA]</scope>
    <source>
        <strain>cv. Columbia</strain>
    </source>
</reference>
<reference key="5">
    <citation type="journal article" date="2012" name="Mol. Cell. Proteomics">
        <title>Comparative large-scale characterisation of plant vs. mammal proteins reveals similar and idiosyncratic N-alpha acetylation features.</title>
        <authorList>
            <person name="Bienvenut W.V."/>
            <person name="Sumpton D."/>
            <person name="Martinez A."/>
            <person name="Lilla S."/>
            <person name="Espagne C."/>
            <person name="Meinnel T."/>
            <person name="Giglione C."/>
        </authorList>
    </citation>
    <scope>ACETYLATION [LARGE SCALE ANALYSIS] AT SER-2</scope>
    <scope>CLEAVAGE OF INITIATOR METHIONINE [LARGE SCALE ANALYSIS]</scope>
    <scope>IDENTIFICATION BY MASS SPECTROMETRY [LARGE SCALE ANALYSIS]</scope>
</reference>
<accession>Q8VYG2</accession>
<accession>Q9CAF7</accession>
<accession>Q9SG76</accession>
<name>GALAK_ARATH</name>
<proteinExistence type="evidence at protein level"/>
<evidence type="ECO:0000250" key="1"/>
<evidence type="ECO:0000255" key="2"/>
<evidence type="ECO:0000269" key="3">
    <source>
    </source>
</evidence>
<evidence type="ECO:0000305" key="4"/>
<evidence type="ECO:0007744" key="5">
    <source>
    </source>
</evidence>